<comment type="function">
    <text evidence="2">Protease subunit of a proteasome-like degradation complex believed to be a general protein degrading machinery.</text>
</comment>
<comment type="catalytic activity">
    <reaction evidence="2">
        <text>ATP-dependent cleavage of peptide bonds with broad specificity.</text>
        <dbReference type="EC" id="3.4.25.2"/>
    </reaction>
</comment>
<comment type="activity regulation">
    <text evidence="2">Allosterically activated by HslU binding.</text>
</comment>
<comment type="subunit">
    <text evidence="2">A double ring-shaped homohexamer of HslV is capped on each side by a ring-shaped HslU homohexamer. The assembly of the HslU/HslV complex is dependent on binding of ATP.</text>
</comment>
<comment type="subcellular location">
    <subcellularLocation>
        <location evidence="2">Cytoplasm</location>
    </subcellularLocation>
</comment>
<comment type="similarity">
    <text evidence="2">Belongs to the peptidase T1B family. HslV subfamily.</text>
</comment>
<accession>P59581</accession>
<name>HSLV_BUCBP</name>
<proteinExistence type="inferred from homology"/>
<sequence length="176" mass="19069">MTTILSVRLNKQVVIGGDGQATLGNTIIKSNVKKVRTLYNNKVIAGFAGGTADAFTLFELFEKKLLMYQGQLQRSAIELAKDWRTDKILRKLEALLAVADKETSLIVTGNGDVIQPENNLMAIGSGGSYAQAAAIAMIENTSLTAKQIVEKALKITSGICIYTNNIFTIKELTSEK</sequence>
<feature type="initiator methionine" description="Removed" evidence="1">
    <location>
        <position position="1"/>
    </location>
</feature>
<feature type="chain" id="PRO_0000148096" description="ATP-dependent protease subunit HslV">
    <location>
        <begin position="2"/>
        <end position="176"/>
    </location>
</feature>
<feature type="active site" evidence="2">
    <location>
        <position position="2"/>
    </location>
</feature>
<feature type="binding site" evidence="2">
    <location>
        <position position="157"/>
    </location>
    <ligand>
        <name>Na(+)</name>
        <dbReference type="ChEBI" id="CHEBI:29101"/>
    </ligand>
</feature>
<feature type="binding site" evidence="2">
    <location>
        <position position="160"/>
    </location>
    <ligand>
        <name>Na(+)</name>
        <dbReference type="ChEBI" id="CHEBI:29101"/>
    </ligand>
</feature>
<feature type="binding site" evidence="2">
    <location>
        <position position="163"/>
    </location>
    <ligand>
        <name>Na(+)</name>
        <dbReference type="ChEBI" id="CHEBI:29101"/>
    </ligand>
</feature>
<protein>
    <recommendedName>
        <fullName evidence="2">ATP-dependent protease subunit HslV</fullName>
        <ecNumber evidence="2">3.4.25.2</ecNumber>
    </recommendedName>
</protein>
<keyword id="KW-0021">Allosteric enzyme</keyword>
<keyword id="KW-0963">Cytoplasm</keyword>
<keyword id="KW-0378">Hydrolase</keyword>
<keyword id="KW-0479">Metal-binding</keyword>
<keyword id="KW-0645">Protease</keyword>
<keyword id="KW-1185">Reference proteome</keyword>
<keyword id="KW-0915">Sodium</keyword>
<keyword id="KW-0888">Threonine protease</keyword>
<evidence type="ECO:0000250" key="1"/>
<evidence type="ECO:0000255" key="2">
    <source>
        <dbReference type="HAMAP-Rule" id="MF_00248"/>
    </source>
</evidence>
<reference key="1">
    <citation type="journal article" date="2003" name="Proc. Natl. Acad. Sci. U.S.A.">
        <title>Reductive genome evolution in Buchnera aphidicola.</title>
        <authorList>
            <person name="van Ham R.C.H.J."/>
            <person name="Kamerbeek J."/>
            <person name="Palacios C."/>
            <person name="Rausell C."/>
            <person name="Abascal F."/>
            <person name="Bastolla U."/>
            <person name="Fernandez J.M."/>
            <person name="Jimenez L."/>
            <person name="Postigo M."/>
            <person name="Silva F.J."/>
            <person name="Tamames J."/>
            <person name="Viguera E."/>
            <person name="Latorre A."/>
            <person name="Valencia A."/>
            <person name="Moran F."/>
            <person name="Moya A."/>
        </authorList>
    </citation>
    <scope>NUCLEOTIDE SEQUENCE [LARGE SCALE GENOMIC DNA]</scope>
    <source>
        <strain>Bp</strain>
    </source>
</reference>
<organism>
    <name type="scientific">Buchnera aphidicola subsp. Baizongia pistaciae (strain Bp)</name>
    <dbReference type="NCBI Taxonomy" id="224915"/>
    <lineage>
        <taxon>Bacteria</taxon>
        <taxon>Pseudomonadati</taxon>
        <taxon>Pseudomonadota</taxon>
        <taxon>Gammaproteobacteria</taxon>
        <taxon>Enterobacterales</taxon>
        <taxon>Erwiniaceae</taxon>
        <taxon>Buchnera</taxon>
    </lineage>
</organism>
<gene>
    <name evidence="2" type="primary">hslV</name>
    <name type="ordered locus">bbp_523</name>
</gene>
<dbReference type="EC" id="3.4.25.2" evidence="2"/>
<dbReference type="EMBL" id="AE016826">
    <property type="protein sequence ID" value="AAO27225.1"/>
    <property type="molecule type" value="Genomic_DNA"/>
</dbReference>
<dbReference type="RefSeq" id="WP_011091626.1">
    <property type="nucleotide sequence ID" value="NC_004545.1"/>
</dbReference>
<dbReference type="SMR" id="P59581"/>
<dbReference type="STRING" id="224915.bbp_523"/>
<dbReference type="MEROPS" id="T01.006"/>
<dbReference type="KEGG" id="bab:bbp_523"/>
<dbReference type="eggNOG" id="COG5405">
    <property type="taxonomic scope" value="Bacteria"/>
</dbReference>
<dbReference type="HOGENOM" id="CLU_093872_1_0_6"/>
<dbReference type="OrthoDB" id="9804884at2"/>
<dbReference type="Proteomes" id="UP000000601">
    <property type="component" value="Chromosome"/>
</dbReference>
<dbReference type="GO" id="GO:0009376">
    <property type="term" value="C:HslUV protease complex"/>
    <property type="evidence" value="ECO:0007669"/>
    <property type="project" value="UniProtKB-UniRule"/>
</dbReference>
<dbReference type="GO" id="GO:0005839">
    <property type="term" value="C:proteasome core complex"/>
    <property type="evidence" value="ECO:0007669"/>
    <property type="project" value="InterPro"/>
</dbReference>
<dbReference type="GO" id="GO:0046872">
    <property type="term" value="F:metal ion binding"/>
    <property type="evidence" value="ECO:0007669"/>
    <property type="project" value="UniProtKB-KW"/>
</dbReference>
<dbReference type="GO" id="GO:0004298">
    <property type="term" value="F:threonine-type endopeptidase activity"/>
    <property type="evidence" value="ECO:0007669"/>
    <property type="project" value="UniProtKB-KW"/>
</dbReference>
<dbReference type="GO" id="GO:0051603">
    <property type="term" value="P:proteolysis involved in protein catabolic process"/>
    <property type="evidence" value="ECO:0007669"/>
    <property type="project" value="InterPro"/>
</dbReference>
<dbReference type="CDD" id="cd01913">
    <property type="entry name" value="protease_HslV"/>
    <property type="match status" value="1"/>
</dbReference>
<dbReference type="FunFam" id="3.60.20.10:FF:000002">
    <property type="entry name" value="ATP-dependent protease subunit HslV"/>
    <property type="match status" value="1"/>
</dbReference>
<dbReference type="Gene3D" id="3.60.20.10">
    <property type="entry name" value="Glutamine Phosphoribosylpyrophosphate, subunit 1, domain 1"/>
    <property type="match status" value="1"/>
</dbReference>
<dbReference type="HAMAP" id="MF_00248">
    <property type="entry name" value="HslV"/>
    <property type="match status" value="1"/>
</dbReference>
<dbReference type="InterPro" id="IPR022281">
    <property type="entry name" value="ATP-dep_Prtase_HsIV_su"/>
</dbReference>
<dbReference type="InterPro" id="IPR029055">
    <property type="entry name" value="Ntn_hydrolases_N"/>
</dbReference>
<dbReference type="InterPro" id="IPR001353">
    <property type="entry name" value="Proteasome_sua/b"/>
</dbReference>
<dbReference type="InterPro" id="IPR023333">
    <property type="entry name" value="Proteasome_suB-type"/>
</dbReference>
<dbReference type="NCBIfam" id="TIGR03692">
    <property type="entry name" value="ATP_dep_HslV"/>
    <property type="match status" value="1"/>
</dbReference>
<dbReference type="NCBIfam" id="NF003964">
    <property type="entry name" value="PRK05456.1"/>
    <property type="match status" value="1"/>
</dbReference>
<dbReference type="PANTHER" id="PTHR32194:SF0">
    <property type="entry name" value="ATP-DEPENDENT PROTEASE SUBUNIT HSLV"/>
    <property type="match status" value="1"/>
</dbReference>
<dbReference type="PANTHER" id="PTHR32194">
    <property type="entry name" value="METALLOPROTEASE TLDD"/>
    <property type="match status" value="1"/>
</dbReference>
<dbReference type="Pfam" id="PF00227">
    <property type="entry name" value="Proteasome"/>
    <property type="match status" value="1"/>
</dbReference>
<dbReference type="PIRSF" id="PIRSF039093">
    <property type="entry name" value="HslV"/>
    <property type="match status" value="1"/>
</dbReference>
<dbReference type="SUPFAM" id="SSF56235">
    <property type="entry name" value="N-terminal nucleophile aminohydrolases (Ntn hydrolases)"/>
    <property type="match status" value="1"/>
</dbReference>
<dbReference type="PROSITE" id="PS51476">
    <property type="entry name" value="PROTEASOME_BETA_2"/>
    <property type="match status" value="1"/>
</dbReference>